<evidence type="ECO:0000255" key="1">
    <source>
        <dbReference type="HAMAP-Rule" id="MF_00081"/>
    </source>
</evidence>
<dbReference type="EMBL" id="L43967">
    <property type="protein sequence ID" value="AAC71423.1"/>
    <property type="molecule type" value="Genomic_DNA"/>
</dbReference>
<dbReference type="PIR" id="F64222">
    <property type="entry name" value="F64222"/>
</dbReference>
<dbReference type="RefSeq" id="WP_009885743.1">
    <property type="nucleotide sequence ID" value="NC_000908.2"/>
</dbReference>
<dbReference type="SMR" id="P47447"/>
<dbReference type="FunCoup" id="P47447">
    <property type="interactions" value="70"/>
</dbReference>
<dbReference type="STRING" id="243273.MG_205"/>
<dbReference type="GeneID" id="88282337"/>
<dbReference type="KEGG" id="mge:MG_205"/>
<dbReference type="eggNOG" id="COG1420">
    <property type="taxonomic scope" value="Bacteria"/>
</dbReference>
<dbReference type="HOGENOM" id="CLU_050019_1_0_14"/>
<dbReference type="InParanoid" id="P47447"/>
<dbReference type="OrthoDB" id="9783139at2"/>
<dbReference type="BioCyc" id="MGEN243273:G1GJ2-238-MONOMER"/>
<dbReference type="Proteomes" id="UP000000807">
    <property type="component" value="Chromosome"/>
</dbReference>
<dbReference type="GO" id="GO:0003677">
    <property type="term" value="F:DNA binding"/>
    <property type="evidence" value="ECO:0007669"/>
    <property type="project" value="InterPro"/>
</dbReference>
<dbReference type="GO" id="GO:0045892">
    <property type="term" value="P:negative regulation of DNA-templated transcription"/>
    <property type="evidence" value="ECO:0000318"/>
    <property type="project" value="GO_Central"/>
</dbReference>
<dbReference type="Gene3D" id="3.30.450.40">
    <property type="match status" value="1"/>
</dbReference>
<dbReference type="Gene3D" id="1.10.10.10">
    <property type="entry name" value="Winged helix-like DNA-binding domain superfamily/Winged helix DNA-binding domain"/>
    <property type="match status" value="1"/>
</dbReference>
<dbReference type="HAMAP" id="MF_00081">
    <property type="entry name" value="HrcA"/>
    <property type="match status" value="1"/>
</dbReference>
<dbReference type="InterPro" id="IPR029016">
    <property type="entry name" value="GAF-like_dom_sf"/>
</dbReference>
<dbReference type="InterPro" id="IPR002571">
    <property type="entry name" value="HrcA"/>
</dbReference>
<dbReference type="InterPro" id="IPR021153">
    <property type="entry name" value="HrcA_C"/>
</dbReference>
<dbReference type="InterPro" id="IPR036388">
    <property type="entry name" value="WH-like_DNA-bd_sf"/>
</dbReference>
<dbReference type="InterPro" id="IPR036390">
    <property type="entry name" value="WH_DNA-bd_sf"/>
</dbReference>
<dbReference type="NCBIfam" id="TIGR00331">
    <property type="entry name" value="hrcA"/>
    <property type="match status" value="1"/>
</dbReference>
<dbReference type="PANTHER" id="PTHR34824">
    <property type="entry name" value="HEAT-INDUCIBLE TRANSCRIPTION REPRESSOR HRCA"/>
    <property type="match status" value="1"/>
</dbReference>
<dbReference type="PANTHER" id="PTHR34824:SF1">
    <property type="entry name" value="HEAT-INDUCIBLE TRANSCRIPTION REPRESSOR HRCA"/>
    <property type="match status" value="1"/>
</dbReference>
<dbReference type="Pfam" id="PF01628">
    <property type="entry name" value="HrcA"/>
    <property type="match status" value="1"/>
</dbReference>
<dbReference type="PIRSF" id="PIRSF005485">
    <property type="entry name" value="HrcA"/>
    <property type="match status" value="1"/>
</dbReference>
<dbReference type="SUPFAM" id="SSF55781">
    <property type="entry name" value="GAF domain-like"/>
    <property type="match status" value="1"/>
</dbReference>
<dbReference type="SUPFAM" id="SSF46785">
    <property type="entry name" value="Winged helix' DNA-binding domain"/>
    <property type="match status" value="1"/>
</dbReference>
<name>HRCA_MYCGE</name>
<feature type="chain" id="PRO_0000182503" description="Heat-inducible transcription repressor HrcA">
    <location>
        <begin position="1"/>
        <end position="343"/>
    </location>
</feature>
<keyword id="KW-1185">Reference proteome</keyword>
<keyword id="KW-0678">Repressor</keyword>
<keyword id="KW-0346">Stress response</keyword>
<keyword id="KW-0804">Transcription</keyword>
<keyword id="KW-0805">Transcription regulation</keyword>
<protein>
    <recommendedName>
        <fullName evidence="1">Heat-inducible transcription repressor HrcA</fullName>
    </recommendedName>
</protein>
<sequence length="343" mass="39513">MKNLTPRQAQILKAIINEYIAYAIPVGSKLLTKKYFKNLSGGTLRNEMAALEKKGFLKKNHISSGRVPSQIGYQYYVKVLNVSNTTNDLKTRLRSVILQQHKTIDEVIELGVKFINEIINLPVVLTNFSSDEVLKKIDLIILDKSFALFLLVSASGKVFKKTISYANQRQFEDIVICVRIFNDRIIDTRFSEINNQLEVLKEIIRTKVHEYQYVIDEILFKLFDLDQIEANKKIYGIQYLAKQPEFANQEKLTKILNLLEDTSVWQQMAFINQTNQKTNIVFGDQLGFKEISVASTLINTTSEAKHQLAIVGPTRMDYQKIKALLTTLKEEIEKYDKKIHNQT</sequence>
<gene>
    <name evidence="1" type="primary">hrcA</name>
    <name type="ordered locus">MG205</name>
</gene>
<reference key="1">
    <citation type="journal article" date="1995" name="Science">
        <title>The minimal gene complement of Mycoplasma genitalium.</title>
        <authorList>
            <person name="Fraser C.M."/>
            <person name="Gocayne J.D."/>
            <person name="White O."/>
            <person name="Adams M.D."/>
            <person name="Clayton R.A."/>
            <person name="Fleischmann R.D."/>
            <person name="Bult C.J."/>
            <person name="Kerlavage A.R."/>
            <person name="Sutton G.G."/>
            <person name="Kelley J.M."/>
            <person name="Fritchman J.L."/>
            <person name="Weidman J.F."/>
            <person name="Small K.V."/>
            <person name="Sandusky M."/>
            <person name="Fuhrmann J.L."/>
            <person name="Nguyen D.T."/>
            <person name="Utterback T.R."/>
            <person name="Saudek D.M."/>
            <person name="Phillips C.A."/>
            <person name="Merrick J.M."/>
            <person name="Tomb J.-F."/>
            <person name="Dougherty B.A."/>
            <person name="Bott K.F."/>
            <person name="Hu P.-C."/>
            <person name="Lucier T.S."/>
            <person name="Peterson S.N."/>
            <person name="Smith H.O."/>
            <person name="Hutchison C.A. III"/>
            <person name="Venter J.C."/>
        </authorList>
    </citation>
    <scope>NUCLEOTIDE SEQUENCE [LARGE SCALE GENOMIC DNA]</scope>
    <source>
        <strain>ATCC 33530 / DSM 19775 / NCTC 10195 / G37</strain>
    </source>
</reference>
<accession>P47447</accession>
<comment type="function">
    <text evidence="1">Negative regulator of class I heat shock genes (grpE-dnaK-dnaJ and groELS operons). Prevents heat-shock induction of these operons.</text>
</comment>
<comment type="similarity">
    <text evidence="1">Belongs to the HrcA family.</text>
</comment>
<proteinExistence type="inferred from homology"/>
<organism>
    <name type="scientific">Mycoplasma genitalium (strain ATCC 33530 / DSM 19775 / NCTC 10195 / G37)</name>
    <name type="common">Mycoplasmoides genitalium</name>
    <dbReference type="NCBI Taxonomy" id="243273"/>
    <lineage>
        <taxon>Bacteria</taxon>
        <taxon>Bacillati</taxon>
        <taxon>Mycoplasmatota</taxon>
        <taxon>Mycoplasmoidales</taxon>
        <taxon>Mycoplasmoidaceae</taxon>
        <taxon>Mycoplasmoides</taxon>
    </lineage>
</organism>